<evidence type="ECO:0000255" key="1">
    <source>
        <dbReference type="HAMAP-Rule" id="MF_01601"/>
    </source>
</evidence>
<dbReference type="EC" id="5.1.3.20" evidence="1"/>
<dbReference type="EMBL" id="CU468135">
    <property type="protein sequence ID" value="CAO95131.1"/>
    <property type="molecule type" value="Genomic_DNA"/>
</dbReference>
<dbReference type="RefSeq" id="WP_012439857.1">
    <property type="nucleotide sequence ID" value="NC_010694.1"/>
</dbReference>
<dbReference type="SMR" id="B2VL47"/>
<dbReference type="STRING" id="465817.ETA_00850"/>
<dbReference type="KEGG" id="eta:ETA_00850"/>
<dbReference type="eggNOG" id="COG0451">
    <property type="taxonomic scope" value="Bacteria"/>
</dbReference>
<dbReference type="HOGENOM" id="CLU_007383_1_3_6"/>
<dbReference type="OrthoDB" id="9803010at2"/>
<dbReference type="UniPathway" id="UPA00356">
    <property type="reaction ID" value="UER00440"/>
</dbReference>
<dbReference type="Proteomes" id="UP000001726">
    <property type="component" value="Chromosome"/>
</dbReference>
<dbReference type="GO" id="GO:0008712">
    <property type="term" value="F:ADP-glyceromanno-heptose 6-epimerase activity"/>
    <property type="evidence" value="ECO:0007669"/>
    <property type="project" value="UniProtKB-UniRule"/>
</dbReference>
<dbReference type="GO" id="GO:0050661">
    <property type="term" value="F:NADP binding"/>
    <property type="evidence" value="ECO:0007669"/>
    <property type="project" value="InterPro"/>
</dbReference>
<dbReference type="GO" id="GO:0097171">
    <property type="term" value="P:ADP-L-glycero-beta-D-manno-heptose biosynthetic process"/>
    <property type="evidence" value="ECO:0007669"/>
    <property type="project" value="UniProtKB-UniPathway"/>
</dbReference>
<dbReference type="GO" id="GO:0005975">
    <property type="term" value="P:carbohydrate metabolic process"/>
    <property type="evidence" value="ECO:0007669"/>
    <property type="project" value="UniProtKB-UniRule"/>
</dbReference>
<dbReference type="CDD" id="cd05248">
    <property type="entry name" value="ADP_GME_SDR_e"/>
    <property type="match status" value="1"/>
</dbReference>
<dbReference type="Gene3D" id="3.40.50.720">
    <property type="entry name" value="NAD(P)-binding Rossmann-like Domain"/>
    <property type="match status" value="1"/>
</dbReference>
<dbReference type="Gene3D" id="3.90.25.10">
    <property type="entry name" value="UDP-galactose 4-epimerase, domain 1"/>
    <property type="match status" value="1"/>
</dbReference>
<dbReference type="HAMAP" id="MF_01601">
    <property type="entry name" value="Heptose_epimerase"/>
    <property type="match status" value="1"/>
</dbReference>
<dbReference type="InterPro" id="IPR001509">
    <property type="entry name" value="Epimerase_deHydtase"/>
</dbReference>
<dbReference type="InterPro" id="IPR011912">
    <property type="entry name" value="Heptose_epim"/>
</dbReference>
<dbReference type="InterPro" id="IPR036291">
    <property type="entry name" value="NAD(P)-bd_dom_sf"/>
</dbReference>
<dbReference type="NCBIfam" id="TIGR02197">
    <property type="entry name" value="heptose_epim"/>
    <property type="match status" value="1"/>
</dbReference>
<dbReference type="NCBIfam" id="NF008360">
    <property type="entry name" value="PRK11150.1"/>
    <property type="match status" value="1"/>
</dbReference>
<dbReference type="PANTHER" id="PTHR43103:SF3">
    <property type="entry name" value="ADP-L-GLYCERO-D-MANNO-HEPTOSE-6-EPIMERASE"/>
    <property type="match status" value="1"/>
</dbReference>
<dbReference type="PANTHER" id="PTHR43103">
    <property type="entry name" value="NUCLEOSIDE-DIPHOSPHATE-SUGAR EPIMERASE"/>
    <property type="match status" value="1"/>
</dbReference>
<dbReference type="Pfam" id="PF01370">
    <property type="entry name" value="Epimerase"/>
    <property type="match status" value="1"/>
</dbReference>
<dbReference type="SUPFAM" id="SSF51735">
    <property type="entry name" value="NAD(P)-binding Rossmann-fold domains"/>
    <property type="match status" value="1"/>
</dbReference>
<feature type="chain" id="PRO_1000148081" description="ADP-L-glycero-D-manno-heptose-6-epimerase">
    <location>
        <begin position="1"/>
        <end position="310"/>
    </location>
</feature>
<feature type="active site" description="Proton acceptor" evidence="1">
    <location>
        <position position="140"/>
    </location>
</feature>
<feature type="active site" description="Proton acceptor" evidence="1">
    <location>
        <position position="178"/>
    </location>
</feature>
<feature type="binding site" evidence="1">
    <location>
        <begin position="10"/>
        <end position="11"/>
    </location>
    <ligand>
        <name>NADP(+)</name>
        <dbReference type="ChEBI" id="CHEBI:58349"/>
    </ligand>
</feature>
<feature type="binding site" evidence="1">
    <location>
        <begin position="31"/>
        <end position="32"/>
    </location>
    <ligand>
        <name>NADP(+)</name>
        <dbReference type="ChEBI" id="CHEBI:58349"/>
    </ligand>
</feature>
<feature type="binding site" evidence="1">
    <location>
        <position position="38"/>
    </location>
    <ligand>
        <name>NADP(+)</name>
        <dbReference type="ChEBI" id="CHEBI:58349"/>
    </ligand>
</feature>
<feature type="binding site" evidence="1">
    <location>
        <position position="53"/>
    </location>
    <ligand>
        <name>NADP(+)</name>
        <dbReference type="ChEBI" id="CHEBI:58349"/>
    </ligand>
</feature>
<feature type="binding site" evidence="1">
    <location>
        <begin position="75"/>
        <end position="79"/>
    </location>
    <ligand>
        <name>NADP(+)</name>
        <dbReference type="ChEBI" id="CHEBI:58349"/>
    </ligand>
</feature>
<feature type="binding site" evidence="1">
    <location>
        <position position="92"/>
    </location>
    <ligand>
        <name>NADP(+)</name>
        <dbReference type="ChEBI" id="CHEBI:58349"/>
    </ligand>
</feature>
<feature type="binding site" evidence="1">
    <location>
        <position position="144"/>
    </location>
    <ligand>
        <name>NADP(+)</name>
        <dbReference type="ChEBI" id="CHEBI:58349"/>
    </ligand>
</feature>
<feature type="binding site" evidence="1">
    <location>
        <position position="169"/>
    </location>
    <ligand>
        <name>substrate</name>
    </ligand>
</feature>
<feature type="binding site" evidence="1">
    <location>
        <position position="170"/>
    </location>
    <ligand>
        <name>NADP(+)</name>
        <dbReference type="ChEBI" id="CHEBI:58349"/>
    </ligand>
</feature>
<feature type="binding site" evidence="1">
    <location>
        <position position="178"/>
    </location>
    <ligand>
        <name>NADP(+)</name>
        <dbReference type="ChEBI" id="CHEBI:58349"/>
    </ligand>
</feature>
<feature type="binding site" evidence="1">
    <location>
        <position position="180"/>
    </location>
    <ligand>
        <name>substrate</name>
    </ligand>
</feature>
<feature type="binding site" evidence="1">
    <location>
        <position position="187"/>
    </location>
    <ligand>
        <name>substrate</name>
    </ligand>
</feature>
<feature type="binding site" evidence="1">
    <location>
        <begin position="201"/>
        <end position="204"/>
    </location>
    <ligand>
        <name>substrate</name>
    </ligand>
</feature>
<feature type="binding site" evidence="1">
    <location>
        <position position="209"/>
    </location>
    <ligand>
        <name>substrate</name>
    </ligand>
</feature>
<feature type="binding site" evidence="1">
    <location>
        <position position="272"/>
    </location>
    <ligand>
        <name>substrate</name>
    </ligand>
</feature>
<keyword id="KW-0119">Carbohydrate metabolism</keyword>
<keyword id="KW-0413">Isomerase</keyword>
<keyword id="KW-0521">NADP</keyword>
<keyword id="KW-1185">Reference proteome</keyword>
<comment type="function">
    <text evidence="1">Catalyzes the interconversion between ADP-D-glycero-beta-D-manno-heptose and ADP-L-glycero-beta-D-manno-heptose via an epimerization at carbon 6 of the heptose.</text>
</comment>
<comment type="catalytic activity">
    <reaction evidence="1">
        <text>ADP-D-glycero-beta-D-manno-heptose = ADP-L-glycero-beta-D-manno-heptose</text>
        <dbReference type="Rhea" id="RHEA:17577"/>
        <dbReference type="ChEBI" id="CHEBI:59967"/>
        <dbReference type="ChEBI" id="CHEBI:61506"/>
        <dbReference type="EC" id="5.1.3.20"/>
    </reaction>
</comment>
<comment type="cofactor">
    <cofactor evidence="1">
        <name>NADP(+)</name>
        <dbReference type="ChEBI" id="CHEBI:58349"/>
    </cofactor>
    <text evidence="1">Binds 1 NADP(+) per subunit.</text>
</comment>
<comment type="pathway">
    <text evidence="1">Nucleotide-sugar biosynthesis; ADP-L-glycero-beta-D-manno-heptose biosynthesis; ADP-L-glycero-beta-D-manno-heptose from D-glycero-beta-D-manno-heptose 7-phosphate: step 4/4.</text>
</comment>
<comment type="subunit">
    <text evidence="1">Homopentamer.</text>
</comment>
<comment type="domain">
    <text evidence="1">Contains a large N-terminal NADP-binding domain, and a smaller C-terminal substrate-binding domain.</text>
</comment>
<comment type="similarity">
    <text evidence="1">Belongs to the NAD(P)-dependent epimerase/dehydratase family. HldD subfamily.</text>
</comment>
<gene>
    <name evidence="1" type="primary">hldD</name>
    <name type="ordered locus">ETA_00850</name>
</gene>
<proteinExistence type="inferred from homology"/>
<protein>
    <recommendedName>
        <fullName evidence="1">ADP-L-glycero-D-manno-heptose-6-epimerase</fullName>
        <ecNumber evidence="1">5.1.3.20</ecNumber>
    </recommendedName>
    <alternativeName>
        <fullName evidence="1">ADP-L-glycero-beta-D-manno-heptose-6-epimerase</fullName>
        <shortName evidence="1">ADP-glyceromanno-heptose 6-epimerase</shortName>
        <shortName evidence="1">ADP-hep 6-epimerase</shortName>
        <shortName evidence="1">AGME</shortName>
    </alternativeName>
</protein>
<name>HLDD_ERWT9</name>
<accession>B2VL47</accession>
<reference key="1">
    <citation type="journal article" date="2008" name="Environ. Microbiol.">
        <title>The genome of Erwinia tasmaniensis strain Et1/99, a non-pathogenic bacterium in the genus Erwinia.</title>
        <authorList>
            <person name="Kube M."/>
            <person name="Migdoll A.M."/>
            <person name="Mueller I."/>
            <person name="Kuhl H."/>
            <person name="Beck A."/>
            <person name="Reinhardt R."/>
            <person name="Geider K."/>
        </authorList>
    </citation>
    <scope>NUCLEOTIDE SEQUENCE [LARGE SCALE GENOMIC DNA]</scope>
    <source>
        <strain>DSM 17950 / CFBP 7177 / CIP 109463 / NCPPB 4357 / Et1/99</strain>
    </source>
</reference>
<sequence length="310" mass="34923">MIIVTGGAGLIGSNIIKALNDRGHTDILVVDNLKDGTKFANLADLNIADYMDKEDFLIAILADEDFGNVEAVFHEGACSSTTEWDGKYMMDNNYQYSKELLHWCLEHQVPFLYASSAATYGGRNADFIEERQYEQPLNVYGYSKMLFDHYVRDILPEAQSQVCGFRYFNVYGPREGHKGSMASVAFHLNTQLKNGENPKLFAGSDGFKRDFIYVEDVASVNLWFWENAVSGIFNCGTGRAESFQEVADAALKYHQSGDIEYIPFPDKLKGRYQEFTLADLTKLRAAGYDKPFKTVAEGVADYMAWLNRNA</sequence>
<organism>
    <name type="scientific">Erwinia tasmaniensis (strain DSM 17950 / CFBP 7177 / CIP 109463 / NCPPB 4357 / Et1/99)</name>
    <dbReference type="NCBI Taxonomy" id="465817"/>
    <lineage>
        <taxon>Bacteria</taxon>
        <taxon>Pseudomonadati</taxon>
        <taxon>Pseudomonadota</taxon>
        <taxon>Gammaproteobacteria</taxon>
        <taxon>Enterobacterales</taxon>
        <taxon>Erwiniaceae</taxon>
        <taxon>Erwinia</taxon>
    </lineage>
</organism>